<dbReference type="EC" id="2.4.2.3" evidence="2"/>
<dbReference type="EMBL" id="Y14282">
    <property type="protein sequence ID" value="CAA74658.2"/>
    <property type="molecule type" value="Genomic_DNA"/>
</dbReference>
<dbReference type="EMBL" id="Y13360">
    <property type="protein sequence ID" value="CAA73795.1"/>
    <property type="molecule type" value="Genomic_DNA"/>
</dbReference>
<dbReference type="EMBL" id="AF233324">
    <property type="protein sequence ID" value="AAF33424.1"/>
    <property type="molecule type" value="Genomic_DNA"/>
</dbReference>
<dbReference type="EMBL" id="AE006468">
    <property type="protein sequence ID" value="AAL22812.1"/>
    <property type="molecule type" value="Genomic_DNA"/>
</dbReference>
<dbReference type="RefSeq" id="NP_462853.1">
    <property type="nucleotide sequence ID" value="NC_003197.2"/>
</dbReference>
<dbReference type="RefSeq" id="WP_000045169.1">
    <property type="nucleotide sequence ID" value="NC_003197.2"/>
</dbReference>
<dbReference type="PDB" id="1RYZ">
    <property type="method" value="X-ray"/>
    <property type="resolution" value="2.90 A"/>
    <property type="chains" value="A/B/C/D/E/F=1-253"/>
</dbReference>
<dbReference type="PDB" id="1SJ9">
    <property type="method" value="X-ray"/>
    <property type="resolution" value="2.50 A"/>
    <property type="chains" value="A/B/C/D/E/F=1-253"/>
</dbReference>
<dbReference type="PDB" id="1Y1Q">
    <property type="method" value="X-ray"/>
    <property type="resolution" value="2.35 A"/>
    <property type="chains" value="A/B/C/D/E/F=1-253"/>
</dbReference>
<dbReference type="PDB" id="1Y1R">
    <property type="method" value="X-ray"/>
    <property type="resolution" value="2.11 A"/>
    <property type="chains" value="A/B/C/D/E/F=1-253"/>
</dbReference>
<dbReference type="PDB" id="1Y1S">
    <property type="method" value="X-ray"/>
    <property type="resolution" value="2.55 A"/>
    <property type="chains" value="A/B/C/D/E/F=1-253"/>
</dbReference>
<dbReference type="PDB" id="1Y1T">
    <property type="method" value="X-ray"/>
    <property type="resolution" value="1.77 A"/>
    <property type="chains" value="A/F=1-253"/>
</dbReference>
<dbReference type="PDB" id="1ZL2">
    <property type="method" value="X-ray"/>
    <property type="resolution" value="1.85 A"/>
    <property type="chains" value="A/B/C/D/E/F=1-253"/>
</dbReference>
<dbReference type="PDB" id="2HN9">
    <property type="method" value="X-ray"/>
    <property type="resolution" value="2.12 A"/>
    <property type="chains" value="A/B/C/D/E/F=1-253"/>
</dbReference>
<dbReference type="PDB" id="2HRD">
    <property type="method" value="X-ray"/>
    <property type="resolution" value="1.70 A"/>
    <property type="chains" value="A/B/C/D/E/F=1-253"/>
</dbReference>
<dbReference type="PDB" id="2HSW">
    <property type="method" value="X-ray"/>
    <property type="resolution" value="1.99 A"/>
    <property type="chains" value="A/B=1-253"/>
</dbReference>
<dbReference type="PDB" id="2HWU">
    <property type="method" value="X-ray"/>
    <property type="resolution" value="2.91 A"/>
    <property type="chains" value="A/B/C/D/E/F=1-253"/>
</dbReference>
<dbReference type="PDB" id="2I8A">
    <property type="method" value="X-ray"/>
    <property type="resolution" value="1.64 A"/>
    <property type="chains" value="A/B/C/D/E/F=2-253"/>
</dbReference>
<dbReference type="PDB" id="2IQ5">
    <property type="method" value="X-ray"/>
    <property type="resolution" value="1.90 A"/>
    <property type="chains" value="A/B=2-253"/>
</dbReference>
<dbReference type="PDB" id="2OEC">
    <property type="method" value="X-ray"/>
    <property type="resolution" value="2.19 A"/>
    <property type="chains" value="A/B/C/D/E/F=2-253"/>
</dbReference>
<dbReference type="PDB" id="2OXF">
    <property type="method" value="X-ray"/>
    <property type="resolution" value="1.76 A"/>
    <property type="chains" value="A/F=4-253"/>
</dbReference>
<dbReference type="PDB" id="2PGA">
    <property type="method" value="X-ray"/>
    <property type="resolution" value="1.74 A"/>
    <property type="chains" value="A/B/C/D/E/F=1-253"/>
</dbReference>
<dbReference type="PDB" id="2QDK">
    <property type="method" value="X-ray"/>
    <property type="resolution" value="1.62 A"/>
    <property type="chains" value="A/B/C/D/E/F=2-253"/>
</dbReference>
<dbReference type="PDB" id="2RJ3">
    <property type="method" value="X-ray"/>
    <property type="resolution" value="2.51 A"/>
    <property type="chains" value="A/B/C/D/E/F=2-253"/>
</dbReference>
<dbReference type="PDB" id="3C74">
    <property type="method" value="X-ray"/>
    <property type="resolution" value="2.38 A"/>
    <property type="chains" value="A/B/C/D/E/F=2-253"/>
</dbReference>
<dbReference type="PDB" id="3DDO">
    <property type="method" value="X-ray"/>
    <property type="resolution" value="1.50 A"/>
    <property type="chains" value="A/B/C/D/E/F=1-253"/>
</dbReference>
<dbReference type="PDB" id="3DPS">
    <property type="method" value="X-ray"/>
    <property type="resolution" value="1.80 A"/>
    <property type="chains" value="A/F=1-253"/>
</dbReference>
<dbReference type="PDB" id="3FWP">
    <property type="method" value="X-ray"/>
    <property type="resolution" value="1.86 A"/>
    <property type="chains" value="A/B/C/D/E/F=1-253"/>
</dbReference>
<dbReference type="PDB" id="4E1V">
    <property type="method" value="X-ray"/>
    <property type="resolution" value="2.15 A"/>
    <property type="chains" value="A/B/C/D/E/F/G/H/I=1-253"/>
</dbReference>
<dbReference type="PDB" id="4OGK">
    <property type="method" value="X-ray"/>
    <property type="resolution" value="2.40 A"/>
    <property type="chains" value="A/B/C/D/E/F=1-253"/>
</dbReference>
<dbReference type="PDBsum" id="1RYZ"/>
<dbReference type="PDBsum" id="1SJ9"/>
<dbReference type="PDBsum" id="1Y1Q"/>
<dbReference type="PDBsum" id="1Y1R"/>
<dbReference type="PDBsum" id="1Y1S"/>
<dbReference type="PDBsum" id="1Y1T"/>
<dbReference type="PDBsum" id="1ZL2"/>
<dbReference type="PDBsum" id="2HN9"/>
<dbReference type="PDBsum" id="2HRD"/>
<dbReference type="PDBsum" id="2HSW"/>
<dbReference type="PDBsum" id="2HWU"/>
<dbReference type="PDBsum" id="2I8A"/>
<dbReference type="PDBsum" id="2IQ5"/>
<dbReference type="PDBsum" id="2OEC"/>
<dbReference type="PDBsum" id="2OXF"/>
<dbReference type="PDBsum" id="2PGA"/>
<dbReference type="PDBsum" id="2QDK"/>
<dbReference type="PDBsum" id="2RJ3"/>
<dbReference type="PDBsum" id="3C74"/>
<dbReference type="PDBsum" id="3DDO"/>
<dbReference type="PDBsum" id="3DPS"/>
<dbReference type="PDBsum" id="3FWP"/>
<dbReference type="PDBsum" id="4E1V"/>
<dbReference type="PDBsum" id="4OGK"/>
<dbReference type="SMR" id="P0A1F6"/>
<dbReference type="STRING" id="99287.STM3968"/>
<dbReference type="DrugBank" id="DB04627">
    <property type="generic name" value="Cyclouridine"/>
</dbReference>
<dbReference type="PaxDb" id="99287-STM3968"/>
<dbReference type="GeneID" id="1255494"/>
<dbReference type="GeneID" id="66758248"/>
<dbReference type="KEGG" id="stm:STM3968"/>
<dbReference type="PATRIC" id="fig|99287.12.peg.4187"/>
<dbReference type="HOGENOM" id="CLU_068457_0_0_6"/>
<dbReference type="OMA" id="MSDVFHL"/>
<dbReference type="PhylomeDB" id="P0A1F6"/>
<dbReference type="BioCyc" id="SENT99287:STM3968-MONOMER"/>
<dbReference type="BRENDA" id="2.4.2.3">
    <property type="organism ID" value="5542"/>
</dbReference>
<dbReference type="UniPathway" id="UPA00574">
    <property type="reaction ID" value="UER00633"/>
</dbReference>
<dbReference type="EvolutionaryTrace" id="P0A1F6"/>
<dbReference type="Proteomes" id="UP000001014">
    <property type="component" value="Chromosome"/>
</dbReference>
<dbReference type="GO" id="GO:0005829">
    <property type="term" value="C:cytosol"/>
    <property type="evidence" value="ECO:0000318"/>
    <property type="project" value="GO_Central"/>
</dbReference>
<dbReference type="GO" id="GO:0004850">
    <property type="term" value="F:uridine phosphorylase activity"/>
    <property type="evidence" value="ECO:0007669"/>
    <property type="project" value="UniProtKB-EC"/>
</dbReference>
<dbReference type="GO" id="GO:0009164">
    <property type="term" value="P:nucleoside catabolic process"/>
    <property type="evidence" value="ECO:0007669"/>
    <property type="project" value="UniProtKB-ARBA"/>
</dbReference>
<dbReference type="GO" id="GO:0009166">
    <property type="term" value="P:nucleotide catabolic process"/>
    <property type="evidence" value="ECO:0007669"/>
    <property type="project" value="InterPro"/>
</dbReference>
<dbReference type="GO" id="GO:0044206">
    <property type="term" value="P:UMP salvage"/>
    <property type="evidence" value="ECO:0007669"/>
    <property type="project" value="UniProtKB-UniPathway"/>
</dbReference>
<dbReference type="CDD" id="cd17767">
    <property type="entry name" value="UP_EcUdp-like"/>
    <property type="match status" value="1"/>
</dbReference>
<dbReference type="FunFam" id="3.40.50.1580:FF:000003">
    <property type="entry name" value="Uridine phosphorylase"/>
    <property type="match status" value="1"/>
</dbReference>
<dbReference type="Gene3D" id="3.40.50.1580">
    <property type="entry name" value="Nucleoside phosphorylase domain"/>
    <property type="match status" value="1"/>
</dbReference>
<dbReference type="InterPro" id="IPR018016">
    <property type="entry name" value="Nucleoside_phosphorylase_CS"/>
</dbReference>
<dbReference type="InterPro" id="IPR000845">
    <property type="entry name" value="Nucleoside_phosphorylase_d"/>
</dbReference>
<dbReference type="InterPro" id="IPR035994">
    <property type="entry name" value="Nucleoside_phosphorylase_sf"/>
</dbReference>
<dbReference type="InterPro" id="IPR010058">
    <property type="entry name" value="Uridine_phosphorylase"/>
</dbReference>
<dbReference type="NCBIfam" id="NF008383">
    <property type="entry name" value="PRK11178.1"/>
    <property type="match status" value="1"/>
</dbReference>
<dbReference type="NCBIfam" id="TIGR01718">
    <property type="entry name" value="Uridine-psphlse"/>
    <property type="match status" value="1"/>
</dbReference>
<dbReference type="PANTHER" id="PTHR43691:SF11">
    <property type="entry name" value="FI09636P-RELATED"/>
    <property type="match status" value="1"/>
</dbReference>
<dbReference type="PANTHER" id="PTHR43691">
    <property type="entry name" value="URIDINE PHOSPHORYLASE"/>
    <property type="match status" value="1"/>
</dbReference>
<dbReference type="Pfam" id="PF01048">
    <property type="entry name" value="PNP_UDP_1"/>
    <property type="match status" value="1"/>
</dbReference>
<dbReference type="SUPFAM" id="SSF53167">
    <property type="entry name" value="Purine and uridine phosphorylases"/>
    <property type="match status" value="1"/>
</dbReference>
<dbReference type="PROSITE" id="PS01232">
    <property type="entry name" value="PNP_UDP_1"/>
    <property type="match status" value="1"/>
</dbReference>
<protein>
    <recommendedName>
        <fullName evidence="2">Uridine phosphorylase</fullName>
        <shortName evidence="2">UPase</shortName>
        <shortName evidence="2">UrdPase</shortName>
        <ecNumber evidence="2">2.4.2.3</ecNumber>
    </recommendedName>
</protein>
<accession>P0A1F6</accession>
<accession>O08432</accession>
<accession>O33808</accession>
<accession>Q9L6M8</accession>
<keyword id="KW-0002">3D-structure</keyword>
<keyword id="KW-0963">Cytoplasm</keyword>
<keyword id="KW-0328">Glycosyltransferase</keyword>
<keyword id="KW-1185">Reference proteome</keyword>
<keyword id="KW-0808">Transferase</keyword>
<gene>
    <name type="primary">udp</name>
    <name type="ordered locus">STM3968</name>
    <name type="ORF">STMD1.21</name>
</gene>
<comment type="function">
    <text evidence="2">Catalyzes the reversible phosphorylytic cleavage of uridine to uracil and ribose-1-phosphate.</text>
</comment>
<comment type="catalytic activity">
    <reaction evidence="2">
        <text>uridine + phosphate = alpha-D-ribose 1-phosphate + uracil</text>
        <dbReference type="Rhea" id="RHEA:24388"/>
        <dbReference type="ChEBI" id="CHEBI:16704"/>
        <dbReference type="ChEBI" id="CHEBI:17568"/>
        <dbReference type="ChEBI" id="CHEBI:43474"/>
        <dbReference type="ChEBI" id="CHEBI:57720"/>
        <dbReference type="EC" id="2.4.2.3"/>
    </reaction>
</comment>
<comment type="pathway">
    <text>Pyrimidine metabolism; UMP biosynthesis via salvage pathway; uracil from uridine (phosphorylase route): step 1/1.</text>
</comment>
<comment type="subunit">
    <text evidence="2">Homohexamer.</text>
</comment>
<comment type="subcellular location">
    <subcellularLocation>
        <location evidence="2">Cytoplasm</location>
    </subcellularLocation>
</comment>
<comment type="similarity">
    <text evidence="3">Belongs to the PNP/UDP phosphorylase family.</text>
</comment>
<name>UDP_SALTY</name>
<sequence length="253" mass="27139">MSKSDVFHLGLTKNDLQGAQLAIVPGDPERVEKIAALMDKPVKLASHREFTSWRAELDGKAVIVCSTGIGGPSTSIAVEELAQLGIRTFLRIGTTGAIQPHINVGDVLVTTASVRLDGASLHFAPMEFPAVADFACTTALVEAAKSIGATTHVGVTASSDTFYPGQERYDTYSGRVVRRFKGSMEEWQAMGVMNYEMESATLLTMCASQGLRAGMVAGVIVNRTQQEIPNAETMKQTESHAVKIVVEAARRLL</sequence>
<feature type="initiator methionine" description="Removed" evidence="1">
    <location>
        <position position="1"/>
    </location>
</feature>
<feature type="chain" id="PRO_0000063185" description="Uridine phosphorylase">
    <location>
        <begin position="2"/>
        <end position="253"/>
    </location>
</feature>
<feature type="sequence conflict" description="In Ref. 2; CAA73795." evidence="3" ref="2">
    <original>A</original>
    <variation>R</variation>
    <location>
        <position position="200"/>
    </location>
</feature>
<feature type="turn" evidence="7">
    <location>
        <begin position="7"/>
        <end position="9"/>
    </location>
</feature>
<feature type="helix" evidence="7">
    <location>
        <begin position="13"/>
        <end position="16"/>
    </location>
</feature>
<feature type="strand" evidence="7">
    <location>
        <begin position="21"/>
        <end position="26"/>
    </location>
</feature>
<feature type="helix" evidence="7">
    <location>
        <begin position="28"/>
        <end position="30"/>
    </location>
</feature>
<feature type="helix" evidence="7">
    <location>
        <begin position="31"/>
        <end position="35"/>
    </location>
</feature>
<feature type="strand" evidence="7">
    <location>
        <begin position="38"/>
        <end position="47"/>
    </location>
</feature>
<feature type="strand" evidence="7">
    <location>
        <begin position="50"/>
        <end position="57"/>
    </location>
</feature>
<feature type="strand" evidence="7">
    <location>
        <begin position="60"/>
        <end position="65"/>
    </location>
</feature>
<feature type="helix" evidence="7">
    <location>
        <begin position="71"/>
        <end position="83"/>
    </location>
</feature>
<feature type="strand" evidence="7">
    <location>
        <begin position="88"/>
        <end position="95"/>
    </location>
</feature>
<feature type="strand" evidence="7">
    <location>
        <begin position="107"/>
        <end position="118"/>
    </location>
</feature>
<feature type="helix" evidence="7">
    <location>
        <begin position="119"/>
        <end position="122"/>
    </location>
</feature>
<feature type="strand" evidence="4">
    <location>
        <begin position="126"/>
        <end position="128"/>
    </location>
</feature>
<feature type="helix" evidence="7">
    <location>
        <begin position="134"/>
        <end position="146"/>
    </location>
</feature>
<feature type="strand" evidence="7">
    <location>
        <begin position="151"/>
        <end position="160"/>
    </location>
</feature>
<feature type="helix" evidence="7">
    <location>
        <begin position="164"/>
        <end position="166"/>
    </location>
</feature>
<feature type="strand" evidence="7">
    <location>
        <begin position="171"/>
        <end position="173"/>
    </location>
</feature>
<feature type="helix" evidence="7">
    <location>
        <begin position="178"/>
        <end position="180"/>
    </location>
</feature>
<feature type="helix" evidence="7">
    <location>
        <begin position="183"/>
        <end position="189"/>
    </location>
</feature>
<feature type="strand" evidence="7">
    <location>
        <begin position="194"/>
        <end position="198"/>
    </location>
</feature>
<feature type="helix" evidence="7">
    <location>
        <begin position="199"/>
        <end position="207"/>
    </location>
</feature>
<feature type="turn" evidence="7">
    <location>
        <begin position="208"/>
        <end position="210"/>
    </location>
</feature>
<feature type="strand" evidence="7">
    <location>
        <begin position="212"/>
        <end position="219"/>
    </location>
</feature>
<feature type="turn" evidence="6">
    <location>
        <begin position="223"/>
        <end position="225"/>
    </location>
</feature>
<feature type="helix" evidence="7">
    <location>
        <begin position="231"/>
        <end position="234"/>
    </location>
</feature>
<feature type="turn" evidence="5">
    <location>
        <begin position="235"/>
        <end position="239"/>
    </location>
</feature>
<feature type="helix" evidence="7">
    <location>
        <begin position="240"/>
        <end position="252"/>
    </location>
</feature>
<evidence type="ECO:0000250" key="1"/>
<evidence type="ECO:0000250" key="2">
    <source>
        <dbReference type="UniProtKB" id="P12758"/>
    </source>
</evidence>
<evidence type="ECO:0000305" key="3"/>
<evidence type="ECO:0007829" key="4">
    <source>
        <dbReference type="PDB" id="1RYZ"/>
    </source>
</evidence>
<evidence type="ECO:0007829" key="5">
    <source>
        <dbReference type="PDB" id="1SJ9"/>
    </source>
</evidence>
<evidence type="ECO:0007829" key="6">
    <source>
        <dbReference type="PDB" id="2HRD"/>
    </source>
</evidence>
<evidence type="ECO:0007829" key="7">
    <source>
        <dbReference type="PDB" id="3DDO"/>
    </source>
</evidence>
<organism>
    <name type="scientific">Salmonella typhimurium (strain LT2 / SGSC1412 / ATCC 700720)</name>
    <dbReference type="NCBI Taxonomy" id="99287"/>
    <lineage>
        <taxon>Bacteria</taxon>
        <taxon>Pseudomonadati</taxon>
        <taxon>Pseudomonadota</taxon>
        <taxon>Gammaproteobacteria</taxon>
        <taxon>Enterobacterales</taxon>
        <taxon>Enterobacteriaceae</taxon>
        <taxon>Salmonella</taxon>
    </lineage>
</organism>
<proteinExistence type="evidence at protein level"/>
<reference key="1">
    <citation type="submission" date="2000-06" db="EMBL/GenBank/DDBJ databases">
        <title>Structure and expression of the gene encoding uridine phosphorylase (udp) in Salmonella typhimurium.</title>
        <authorList>
            <person name="Errais L.L."/>
            <person name="Ukhabotina L.S."/>
            <person name="Eremina S.Y."/>
            <person name="Evdokimova A.A."/>
            <person name="Mironov A.S."/>
        </authorList>
    </citation>
    <scope>NUCLEOTIDE SEQUENCE [GENOMIC DNA]</scope>
    <source>
        <strain>LT2</strain>
    </source>
</reference>
<reference key="2">
    <citation type="journal article" date="1998" name="Bioorg. Khim.">
        <title>Protein engineering of uridine phosphorylase from Escherichia coli K-12. I. Cloning and expression of uridine phosphorylase genes from Klebsiella aerogenes and Salmonella typhimurium in E. coli.</title>
        <authorList>
            <person name="Veiko V.P."/>
            <person name="Chebotaev D.V."/>
            <person name="Ovcharova I.V."/>
            <person name="Gul'Ko L.B."/>
        </authorList>
    </citation>
    <scope>NUCLEOTIDE SEQUENCE [GENOMIC DNA]</scope>
    <source>
        <strain>LT2</strain>
    </source>
</reference>
<reference key="3">
    <citation type="journal article" date="2001" name="Nature">
        <title>Complete genome sequence of Salmonella enterica serovar Typhimurium LT2.</title>
        <authorList>
            <person name="McClelland M."/>
            <person name="Sanderson K.E."/>
            <person name="Spieth J."/>
            <person name="Clifton S.W."/>
            <person name="Latreille P."/>
            <person name="Courtney L."/>
            <person name="Porwollik S."/>
            <person name="Ali J."/>
            <person name="Dante M."/>
            <person name="Du F."/>
            <person name="Hou S."/>
            <person name="Layman D."/>
            <person name="Leonard S."/>
            <person name="Nguyen C."/>
            <person name="Scott K."/>
            <person name="Holmes A."/>
            <person name="Grewal N."/>
            <person name="Mulvaney E."/>
            <person name="Ryan E."/>
            <person name="Sun H."/>
            <person name="Florea L."/>
            <person name="Miller W."/>
            <person name="Stoneking T."/>
            <person name="Nhan M."/>
            <person name="Waterston R."/>
            <person name="Wilson R.K."/>
        </authorList>
    </citation>
    <scope>NUCLEOTIDE SEQUENCE [LARGE SCALE GENOMIC DNA]</scope>
    <source>
        <strain>LT2 / SGSC1412 / ATCC 700720</strain>
    </source>
</reference>